<gene>
    <name evidence="1" type="primary">mnmE</name>
    <name evidence="1" type="synonym">trmE</name>
    <name type="ordered locus">SPO3895</name>
</gene>
<comment type="function">
    <text evidence="1">Exhibits a very high intrinsic GTPase hydrolysis rate. Involved in the addition of a carboxymethylaminomethyl (cmnm) group at the wobble position (U34) of certain tRNAs, forming tRNA-cmnm(5)s(2)U34.</text>
</comment>
<comment type="cofactor">
    <cofactor evidence="1">
        <name>K(+)</name>
        <dbReference type="ChEBI" id="CHEBI:29103"/>
    </cofactor>
    <text evidence="1">Binds 1 potassium ion per subunit.</text>
</comment>
<comment type="subunit">
    <text evidence="1">Homodimer. Heterotetramer of two MnmE and two MnmG subunits.</text>
</comment>
<comment type="subcellular location">
    <subcellularLocation>
        <location evidence="1">Cytoplasm</location>
    </subcellularLocation>
</comment>
<comment type="similarity">
    <text evidence="1">Belongs to the TRAFAC class TrmE-Era-EngA-EngB-Septin-like GTPase superfamily. TrmE GTPase family.</text>
</comment>
<evidence type="ECO:0000255" key="1">
    <source>
        <dbReference type="HAMAP-Rule" id="MF_00379"/>
    </source>
</evidence>
<reference key="1">
    <citation type="journal article" date="2004" name="Nature">
        <title>Genome sequence of Silicibacter pomeroyi reveals adaptations to the marine environment.</title>
        <authorList>
            <person name="Moran M.A."/>
            <person name="Buchan A."/>
            <person name="Gonzalez J.M."/>
            <person name="Heidelberg J.F."/>
            <person name="Whitman W.B."/>
            <person name="Kiene R.P."/>
            <person name="Henriksen J.R."/>
            <person name="King G.M."/>
            <person name="Belas R."/>
            <person name="Fuqua C."/>
            <person name="Brinkac L.M."/>
            <person name="Lewis M."/>
            <person name="Johri S."/>
            <person name="Weaver B."/>
            <person name="Pai G."/>
            <person name="Eisen J.A."/>
            <person name="Rahe E."/>
            <person name="Sheldon W.M."/>
            <person name="Ye W."/>
            <person name="Miller T.R."/>
            <person name="Carlton J."/>
            <person name="Rasko D.A."/>
            <person name="Paulsen I.T."/>
            <person name="Ren Q."/>
            <person name="Daugherty S.C."/>
            <person name="DeBoy R.T."/>
            <person name="Dodson R.J."/>
            <person name="Durkin A.S."/>
            <person name="Madupu R."/>
            <person name="Nelson W.C."/>
            <person name="Sullivan S.A."/>
            <person name="Rosovitz M.J."/>
            <person name="Haft D.H."/>
            <person name="Selengut J."/>
            <person name="Ward N."/>
        </authorList>
    </citation>
    <scope>NUCLEOTIDE SEQUENCE [LARGE SCALE GENOMIC DNA]</scope>
    <source>
        <strain>ATCC 700808 / DSM 15171 / DSS-3</strain>
    </source>
</reference>
<reference key="2">
    <citation type="journal article" date="2014" name="Stand. Genomic Sci.">
        <title>An updated genome annotation for the model marine bacterium Ruegeria pomeroyi DSS-3.</title>
        <authorList>
            <person name="Rivers A.R."/>
            <person name="Smith C.B."/>
            <person name="Moran M.A."/>
        </authorList>
    </citation>
    <scope>GENOME REANNOTATION</scope>
    <source>
        <strain>ATCC 700808 / DSM 15171 / DSS-3</strain>
    </source>
</reference>
<name>MNME_RUEPO</name>
<sequence>MDTIFALATAQGKAGVAVIRLSGPRAYHTACLLAGPDLPSRGLSVRQLKDSQGARLDDGVVLTFAAPASFTGEDVAEFQIHGSLATTEAVLRCLGDLDGLRLAEPGEFTRRALENGKMSLPQVEGLADLIDAETEAQRKQAQAVLNGALGQLAEGWRAKLIRAAALLEAVIDFADEEVPTDVSPEVRALLAEVRADLEHEIAGVRIAERIRTGFEVAIIGPPNAGKSTLLNMLAGREAALTSEVAGTTRDVIEVRMDLGGLPVTLLDTAGLRETGDLVEGMGIALARRRADQADLRVFLTEDVDAMGVELQPDDLHVLPKADQRPDTANAISGVTGQGVDQLVQRISDVLKTRSSSAGIATRERHRVAMKTALDALDRTGTVLESGPDLYDIAAEELRTAIRALESLVGRIGVETLLDEIFASFCLGK</sequence>
<feature type="chain" id="PRO_0000345905" description="tRNA modification GTPase MnmE">
    <location>
        <begin position="1"/>
        <end position="428"/>
    </location>
</feature>
<feature type="domain" description="TrmE-type G">
    <location>
        <begin position="213"/>
        <end position="351"/>
    </location>
</feature>
<feature type="binding site" evidence="1">
    <location>
        <position position="20"/>
    </location>
    <ligand>
        <name>(6S)-5-formyl-5,6,7,8-tetrahydrofolate</name>
        <dbReference type="ChEBI" id="CHEBI:57457"/>
    </ligand>
</feature>
<feature type="binding site" evidence="1">
    <location>
        <position position="77"/>
    </location>
    <ligand>
        <name>(6S)-5-formyl-5,6,7,8-tetrahydrofolate</name>
        <dbReference type="ChEBI" id="CHEBI:57457"/>
    </ligand>
</feature>
<feature type="binding site" evidence="1">
    <location>
        <position position="117"/>
    </location>
    <ligand>
        <name>(6S)-5-formyl-5,6,7,8-tetrahydrofolate</name>
        <dbReference type="ChEBI" id="CHEBI:57457"/>
    </ligand>
</feature>
<feature type="binding site" evidence="1">
    <location>
        <begin position="223"/>
        <end position="228"/>
    </location>
    <ligand>
        <name>GTP</name>
        <dbReference type="ChEBI" id="CHEBI:37565"/>
    </ligand>
</feature>
<feature type="binding site" evidence="1">
    <location>
        <position position="223"/>
    </location>
    <ligand>
        <name>K(+)</name>
        <dbReference type="ChEBI" id="CHEBI:29103"/>
    </ligand>
</feature>
<feature type="binding site" evidence="1">
    <location>
        <position position="227"/>
    </location>
    <ligand>
        <name>Mg(2+)</name>
        <dbReference type="ChEBI" id="CHEBI:18420"/>
    </ligand>
</feature>
<feature type="binding site" evidence="1">
    <location>
        <begin position="242"/>
        <end position="248"/>
    </location>
    <ligand>
        <name>GTP</name>
        <dbReference type="ChEBI" id="CHEBI:37565"/>
    </ligand>
</feature>
<feature type="binding site" evidence="1">
    <location>
        <position position="242"/>
    </location>
    <ligand>
        <name>K(+)</name>
        <dbReference type="ChEBI" id="CHEBI:29103"/>
    </ligand>
</feature>
<feature type="binding site" evidence="1">
    <location>
        <position position="244"/>
    </location>
    <ligand>
        <name>K(+)</name>
        <dbReference type="ChEBI" id="CHEBI:29103"/>
    </ligand>
</feature>
<feature type="binding site" evidence="1">
    <location>
        <position position="247"/>
    </location>
    <ligand>
        <name>K(+)</name>
        <dbReference type="ChEBI" id="CHEBI:29103"/>
    </ligand>
</feature>
<feature type="binding site" evidence="1">
    <location>
        <position position="248"/>
    </location>
    <ligand>
        <name>Mg(2+)</name>
        <dbReference type="ChEBI" id="CHEBI:18420"/>
    </ligand>
</feature>
<feature type="binding site" evidence="1">
    <location>
        <begin position="267"/>
        <end position="270"/>
    </location>
    <ligand>
        <name>GTP</name>
        <dbReference type="ChEBI" id="CHEBI:37565"/>
    </ligand>
</feature>
<feature type="binding site" evidence="1">
    <location>
        <position position="428"/>
    </location>
    <ligand>
        <name>(6S)-5-formyl-5,6,7,8-tetrahydrofolate</name>
        <dbReference type="ChEBI" id="CHEBI:57457"/>
    </ligand>
</feature>
<dbReference type="EC" id="3.6.-.-" evidence="1"/>
<dbReference type="EMBL" id="CP000031">
    <property type="protein sequence ID" value="AAV97109.1"/>
    <property type="molecule type" value="Genomic_DNA"/>
</dbReference>
<dbReference type="RefSeq" id="WP_011049566.1">
    <property type="nucleotide sequence ID" value="NC_003911.12"/>
</dbReference>
<dbReference type="SMR" id="Q5LLM7"/>
<dbReference type="STRING" id="246200.SPO3895"/>
<dbReference type="PaxDb" id="246200-SPO3895"/>
<dbReference type="KEGG" id="sil:SPO3895"/>
<dbReference type="eggNOG" id="COG0486">
    <property type="taxonomic scope" value="Bacteria"/>
</dbReference>
<dbReference type="HOGENOM" id="CLU_019624_3_1_5"/>
<dbReference type="OrthoDB" id="9805918at2"/>
<dbReference type="Proteomes" id="UP000001023">
    <property type="component" value="Chromosome"/>
</dbReference>
<dbReference type="GO" id="GO:0005737">
    <property type="term" value="C:cytoplasm"/>
    <property type="evidence" value="ECO:0007669"/>
    <property type="project" value="UniProtKB-SubCell"/>
</dbReference>
<dbReference type="GO" id="GO:0005525">
    <property type="term" value="F:GTP binding"/>
    <property type="evidence" value="ECO:0007669"/>
    <property type="project" value="UniProtKB-UniRule"/>
</dbReference>
<dbReference type="GO" id="GO:0003924">
    <property type="term" value="F:GTPase activity"/>
    <property type="evidence" value="ECO:0007669"/>
    <property type="project" value="UniProtKB-UniRule"/>
</dbReference>
<dbReference type="GO" id="GO:0046872">
    <property type="term" value="F:metal ion binding"/>
    <property type="evidence" value="ECO:0007669"/>
    <property type="project" value="UniProtKB-KW"/>
</dbReference>
<dbReference type="GO" id="GO:0030488">
    <property type="term" value="P:tRNA methylation"/>
    <property type="evidence" value="ECO:0007669"/>
    <property type="project" value="TreeGrafter"/>
</dbReference>
<dbReference type="GO" id="GO:0002098">
    <property type="term" value="P:tRNA wobble uridine modification"/>
    <property type="evidence" value="ECO:0007669"/>
    <property type="project" value="TreeGrafter"/>
</dbReference>
<dbReference type="CDD" id="cd04164">
    <property type="entry name" value="trmE"/>
    <property type="match status" value="1"/>
</dbReference>
<dbReference type="CDD" id="cd14858">
    <property type="entry name" value="TrmE_N"/>
    <property type="match status" value="1"/>
</dbReference>
<dbReference type="FunFam" id="3.30.1360.120:FF:000007">
    <property type="entry name" value="tRNA modification GTPase GTPBP3, mitochondrial"/>
    <property type="match status" value="1"/>
</dbReference>
<dbReference type="Gene3D" id="3.40.50.300">
    <property type="entry name" value="P-loop containing nucleotide triphosphate hydrolases"/>
    <property type="match status" value="1"/>
</dbReference>
<dbReference type="Gene3D" id="3.30.1360.120">
    <property type="entry name" value="Probable tRNA modification gtpase trme, domain 1"/>
    <property type="match status" value="1"/>
</dbReference>
<dbReference type="Gene3D" id="1.20.120.430">
    <property type="entry name" value="tRNA modification GTPase MnmE domain 2"/>
    <property type="match status" value="1"/>
</dbReference>
<dbReference type="HAMAP" id="MF_00379">
    <property type="entry name" value="GTPase_MnmE"/>
    <property type="match status" value="1"/>
</dbReference>
<dbReference type="InterPro" id="IPR031168">
    <property type="entry name" value="G_TrmE"/>
</dbReference>
<dbReference type="InterPro" id="IPR006073">
    <property type="entry name" value="GTP-bd"/>
</dbReference>
<dbReference type="InterPro" id="IPR018948">
    <property type="entry name" value="GTP-bd_TrmE_N"/>
</dbReference>
<dbReference type="InterPro" id="IPR004520">
    <property type="entry name" value="GTPase_MnmE"/>
</dbReference>
<dbReference type="InterPro" id="IPR027368">
    <property type="entry name" value="MnmE_dom2"/>
</dbReference>
<dbReference type="InterPro" id="IPR025867">
    <property type="entry name" value="MnmE_helical"/>
</dbReference>
<dbReference type="InterPro" id="IPR027417">
    <property type="entry name" value="P-loop_NTPase"/>
</dbReference>
<dbReference type="InterPro" id="IPR005225">
    <property type="entry name" value="Small_GTP-bd"/>
</dbReference>
<dbReference type="InterPro" id="IPR027266">
    <property type="entry name" value="TrmE/GcvT_dom1"/>
</dbReference>
<dbReference type="NCBIfam" id="NF003661">
    <property type="entry name" value="PRK05291.1-3"/>
    <property type="match status" value="1"/>
</dbReference>
<dbReference type="NCBIfam" id="TIGR00231">
    <property type="entry name" value="small_GTP"/>
    <property type="match status" value="1"/>
</dbReference>
<dbReference type="PANTHER" id="PTHR42714">
    <property type="entry name" value="TRNA MODIFICATION GTPASE GTPBP3"/>
    <property type="match status" value="1"/>
</dbReference>
<dbReference type="PANTHER" id="PTHR42714:SF2">
    <property type="entry name" value="TRNA MODIFICATION GTPASE GTPBP3, MITOCHONDRIAL"/>
    <property type="match status" value="1"/>
</dbReference>
<dbReference type="Pfam" id="PF01926">
    <property type="entry name" value="MMR_HSR1"/>
    <property type="match status" value="1"/>
</dbReference>
<dbReference type="Pfam" id="PF12631">
    <property type="entry name" value="MnmE_helical"/>
    <property type="match status" value="1"/>
</dbReference>
<dbReference type="Pfam" id="PF10396">
    <property type="entry name" value="TrmE_N"/>
    <property type="match status" value="1"/>
</dbReference>
<dbReference type="PRINTS" id="PR00326">
    <property type="entry name" value="GTP1OBG"/>
</dbReference>
<dbReference type="SUPFAM" id="SSF103025">
    <property type="entry name" value="Folate-binding domain"/>
    <property type="match status" value="1"/>
</dbReference>
<dbReference type="SUPFAM" id="SSF52540">
    <property type="entry name" value="P-loop containing nucleoside triphosphate hydrolases"/>
    <property type="match status" value="1"/>
</dbReference>
<dbReference type="SUPFAM" id="SSF116878">
    <property type="entry name" value="TrmE connector domain"/>
    <property type="match status" value="1"/>
</dbReference>
<dbReference type="PROSITE" id="PS51709">
    <property type="entry name" value="G_TRME"/>
    <property type="match status" value="1"/>
</dbReference>
<protein>
    <recommendedName>
        <fullName evidence="1">tRNA modification GTPase MnmE</fullName>
        <ecNumber evidence="1">3.6.-.-</ecNumber>
    </recommendedName>
</protein>
<accession>Q5LLM7</accession>
<keyword id="KW-0963">Cytoplasm</keyword>
<keyword id="KW-0342">GTP-binding</keyword>
<keyword id="KW-0378">Hydrolase</keyword>
<keyword id="KW-0460">Magnesium</keyword>
<keyword id="KW-0479">Metal-binding</keyword>
<keyword id="KW-0547">Nucleotide-binding</keyword>
<keyword id="KW-0630">Potassium</keyword>
<keyword id="KW-1185">Reference proteome</keyword>
<keyword id="KW-0819">tRNA processing</keyword>
<organism>
    <name type="scientific">Ruegeria pomeroyi (strain ATCC 700808 / DSM 15171 / DSS-3)</name>
    <name type="common">Silicibacter pomeroyi</name>
    <dbReference type="NCBI Taxonomy" id="246200"/>
    <lineage>
        <taxon>Bacteria</taxon>
        <taxon>Pseudomonadati</taxon>
        <taxon>Pseudomonadota</taxon>
        <taxon>Alphaproteobacteria</taxon>
        <taxon>Rhodobacterales</taxon>
        <taxon>Roseobacteraceae</taxon>
        <taxon>Ruegeria</taxon>
    </lineage>
</organism>
<proteinExistence type="inferred from homology"/>